<gene>
    <name evidence="1" type="primary">rsxB</name>
    <name type="ordered locus">STY1664</name>
    <name type="ordered locus">t1326</name>
</gene>
<keyword id="KW-0004">4Fe-4S</keyword>
<keyword id="KW-0997">Cell inner membrane</keyword>
<keyword id="KW-1003">Cell membrane</keyword>
<keyword id="KW-0249">Electron transport</keyword>
<keyword id="KW-0408">Iron</keyword>
<keyword id="KW-0411">Iron-sulfur</keyword>
<keyword id="KW-0472">Membrane</keyword>
<keyword id="KW-0479">Metal-binding</keyword>
<keyword id="KW-0677">Repeat</keyword>
<keyword id="KW-1278">Translocase</keyword>
<keyword id="KW-0813">Transport</keyword>
<accession>Q8Z6R0</accession>
<evidence type="ECO:0000255" key="1">
    <source>
        <dbReference type="HAMAP-Rule" id="MF_00463"/>
    </source>
</evidence>
<dbReference type="EC" id="7.-.-.-" evidence="1"/>
<dbReference type="EMBL" id="AL513382">
    <property type="protein sequence ID" value="CAD01909.1"/>
    <property type="molecule type" value="Genomic_DNA"/>
</dbReference>
<dbReference type="EMBL" id="AE014613">
    <property type="protein sequence ID" value="AAO68976.1"/>
    <property type="molecule type" value="Genomic_DNA"/>
</dbReference>
<dbReference type="RefSeq" id="NP_456072.1">
    <property type="nucleotide sequence ID" value="NC_003198.1"/>
</dbReference>
<dbReference type="RefSeq" id="WP_001092600.1">
    <property type="nucleotide sequence ID" value="NZ_WSUR01000011.1"/>
</dbReference>
<dbReference type="SMR" id="Q8Z6R0"/>
<dbReference type="STRING" id="220341.gene:17585599"/>
<dbReference type="KEGG" id="stt:t1326"/>
<dbReference type="KEGG" id="sty:STY1664"/>
<dbReference type="PATRIC" id="fig|220341.7.peg.1674"/>
<dbReference type="eggNOG" id="COG2878">
    <property type="taxonomic scope" value="Bacteria"/>
</dbReference>
<dbReference type="HOGENOM" id="CLU_063448_2_0_6"/>
<dbReference type="OMA" id="ITKCVPG"/>
<dbReference type="OrthoDB" id="9789936at2"/>
<dbReference type="Proteomes" id="UP000000541">
    <property type="component" value="Chromosome"/>
</dbReference>
<dbReference type="Proteomes" id="UP000002670">
    <property type="component" value="Chromosome"/>
</dbReference>
<dbReference type="GO" id="GO:0005886">
    <property type="term" value="C:plasma membrane"/>
    <property type="evidence" value="ECO:0007669"/>
    <property type="project" value="UniProtKB-SubCell"/>
</dbReference>
<dbReference type="GO" id="GO:0051539">
    <property type="term" value="F:4 iron, 4 sulfur cluster binding"/>
    <property type="evidence" value="ECO:0007669"/>
    <property type="project" value="UniProtKB-UniRule"/>
</dbReference>
<dbReference type="GO" id="GO:0009055">
    <property type="term" value="F:electron transfer activity"/>
    <property type="evidence" value="ECO:0007669"/>
    <property type="project" value="InterPro"/>
</dbReference>
<dbReference type="GO" id="GO:0046872">
    <property type="term" value="F:metal ion binding"/>
    <property type="evidence" value="ECO:0007669"/>
    <property type="project" value="UniProtKB-KW"/>
</dbReference>
<dbReference type="GO" id="GO:0022900">
    <property type="term" value="P:electron transport chain"/>
    <property type="evidence" value="ECO:0007669"/>
    <property type="project" value="UniProtKB-UniRule"/>
</dbReference>
<dbReference type="FunFam" id="1.10.15.40:FF:000001">
    <property type="entry name" value="Ion-translocating oxidoreductase complex subunit B"/>
    <property type="match status" value="1"/>
</dbReference>
<dbReference type="Gene3D" id="3.30.70.20">
    <property type="match status" value="1"/>
</dbReference>
<dbReference type="Gene3D" id="1.10.15.40">
    <property type="entry name" value="Electron transport complex subunit B, putative Fe-S cluster"/>
    <property type="match status" value="1"/>
</dbReference>
<dbReference type="HAMAP" id="MF_00463">
    <property type="entry name" value="RsxB_RnfB"/>
    <property type="match status" value="1"/>
</dbReference>
<dbReference type="InterPro" id="IPR007202">
    <property type="entry name" value="4Fe-4S_dom"/>
</dbReference>
<dbReference type="InterPro" id="IPR017896">
    <property type="entry name" value="4Fe4S_Fe-S-bd"/>
</dbReference>
<dbReference type="InterPro" id="IPR017900">
    <property type="entry name" value="4Fe4S_Fe_S_CS"/>
</dbReference>
<dbReference type="InterPro" id="IPR050395">
    <property type="entry name" value="4Fe4S_Ferredoxin_RnfB"/>
</dbReference>
<dbReference type="InterPro" id="IPR010207">
    <property type="entry name" value="Elect_transpt_cplx_RnfB/RsxB"/>
</dbReference>
<dbReference type="InterPro" id="IPR016463">
    <property type="entry name" value="RnfB/RsxB_Proteobac"/>
</dbReference>
<dbReference type="NCBIfam" id="NF003475">
    <property type="entry name" value="PRK05113.1"/>
    <property type="match status" value="1"/>
</dbReference>
<dbReference type="NCBIfam" id="TIGR01944">
    <property type="entry name" value="rnfB"/>
    <property type="match status" value="1"/>
</dbReference>
<dbReference type="PANTHER" id="PTHR43560">
    <property type="entry name" value="ION-TRANSLOCATING OXIDOREDUCTASE COMPLEX SUBUNIT B"/>
    <property type="match status" value="1"/>
</dbReference>
<dbReference type="PANTHER" id="PTHR43560:SF1">
    <property type="entry name" value="ION-TRANSLOCATING OXIDOREDUCTASE COMPLEX SUBUNIT B"/>
    <property type="match status" value="1"/>
</dbReference>
<dbReference type="Pfam" id="PF14697">
    <property type="entry name" value="Fer4_21"/>
    <property type="match status" value="1"/>
</dbReference>
<dbReference type="Pfam" id="PF04060">
    <property type="entry name" value="FeS"/>
    <property type="match status" value="1"/>
</dbReference>
<dbReference type="PIRSF" id="PIRSF005784">
    <property type="entry name" value="Elect_transpt_RnfB"/>
    <property type="match status" value="1"/>
</dbReference>
<dbReference type="SUPFAM" id="SSF54862">
    <property type="entry name" value="4Fe-4S ferredoxins"/>
    <property type="match status" value="1"/>
</dbReference>
<dbReference type="PROSITE" id="PS51656">
    <property type="entry name" value="4FE4S"/>
    <property type="match status" value="1"/>
</dbReference>
<dbReference type="PROSITE" id="PS00198">
    <property type="entry name" value="4FE4S_FER_1"/>
    <property type="match status" value="2"/>
</dbReference>
<dbReference type="PROSITE" id="PS51379">
    <property type="entry name" value="4FE4S_FER_2"/>
    <property type="match status" value="2"/>
</dbReference>
<protein>
    <recommendedName>
        <fullName evidence="1">Ion-translocating oxidoreductase complex subunit B</fullName>
        <ecNumber evidence="1">7.-.-.-</ecNumber>
    </recommendedName>
    <alternativeName>
        <fullName evidence="1">Rsx electron transport complex subunit B</fullName>
    </alternativeName>
</protein>
<name>RSXB_SALTI</name>
<organism>
    <name type="scientific">Salmonella typhi</name>
    <dbReference type="NCBI Taxonomy" id="90370"/>
    <lineage>
        <taxon>Bacteria</taxon>
        <taxon>Pseudomonadati</taxon>
        <taxon>Pseudomonadota</taxon>
        <taxon>Gammaproteobacteria</taxon>
        <taxon>Enterobacterales</taxon>
        <taxon>Enterobacteriaceae</taxon>
        <taxon>Salmonella</taxon>
    </lineage>
</organism>
<reference key="1">
    <citation type="journal article" date="2001" name="Nature">
        <title>Complete genome sequence of a multiple drug resistant Salmonella enterica serovar Typhi CT18.</title>
        <authorList>
            <person name="Parkhill J."/>
            <person name="Dougan G."/>
            <person name="James K.D."/>
            <person name="Thomson N.R."/>
            <person name="Pickard D."/>
            <person name="Wain J."/>
            <person name="Churcher C.M."/>
            <person name="Mungall K.L."/>
            <person name="Bentley S.D."/>
            <person name="Holden M.T.G."/>
            <person name="Sebaihia M."/>
            <person name="Baker S."/>
            <person name="Basham D."/>
            <person name="Brooks K."/>
            <person name="Chillingworth T."/>
            <person name="Connerton P."/>
            <person name="Cronin A."/>
            <person name="Davis P."/>
            <person name="Davies R.M."/>
            <person name="Dowd L."/>
            <person name="White N."/>
            <person name="Farrar J."/>
            <person name="Feltwell T."/>
            <person name="Hamlin N."/>
            <person name="Haque A."/>
            <person name="Hien T.T."/>
            <person name="Holroyd S."/>
            <person name="Jagels K."/>
            <person name="Krogh A."/>
            <person name="Larsen T.S."/>
            <person name="Leather S."/>
            <person name="Moule S."/>
            <person name="O'Gaora P."/>
            <person name="Parry C."/>
            <person name="Quail M.A."/>
            <person name="Rutherford K.M."/>
            <person name="Simmonds M."/>
            <person name="Skelton J."/>
            <person name="Stevens K."/>
            <person name="Whitehead S."/>
            <person name="Barrell B.G."/>
        </authorList>
    </citation>
    <scope>NUCLEOTIDE SEQUENCE [LARGE SCALE GENOMIC DNA]</scope>
    <source>
        <strain>CT18</strain>
    </source>
</reference>
<reference key="2">
    <citation type="journal article" date="2003" name="J. Bacteriol.">
        <title>Comparative genomics of Salmonella enterica serovar Typhi strains Ty2 and CT18.</title>
        <authorList>
            <person name="Deng W."/>
            <person name="Liou S.-R."/>
            <person name="Plunkett G. III"/>
            <person name="Mayhew G.F."/>
            <person name="Rose D.J."/>
            <person name="Burland V."/>
            <person name="Kodoyianni V."/>
            <person name="Schwartz D.C."/>
            <person name="Blattner F.R."/>
        </authorList>
    </citation>
    <scope>NUCLEOTIDE SEQUENCE [LARGE SCALE GENOMIC DNA]</scope>
    <source>
        <strain>ATCC 700931 / Ty2</strain>
    </source>
</reference>
<proteinExistence type="inferred from homology"/>
<sequence length="192" mass="20677">MNTIWIAVGALTLLGLVFGAILGYASRRFAVEDDPVVEKIDAILPQSQCGQCGYPGCRPYAEAVGLQGEKINRCAPGGEAVMLKMAELLNVEPQPCDGEEQQAAPVRMLAVIDENNCIGCTKCIQACPVDAIVGATRAMHTVMSDLCTGCNLCVDPCPTHCIELRPVNETPDSWKWDLNTIPVRIIPVEQHA</sequence>
<feature type="chain" id="PRO_0000216278" description="Ion-translocating oxidoreductase complex subunit B">
    <location>
        <begin position="1"/>
        <end position="192"/>
    </location>
</feature>
<feature type="domain" description="4Fe-4S" evidence="1">
    <location>
        <begin position="32"/>
        <end position="91"/>
    </location>
</feature>
<feature type="domain" description="4Fe-4S ferredoxin-type 1" evidence="1">
    <location>
        <begin position="108"/>
        <end position="137"/>
    </location>
</feature>
<feature type="domain" description="4Fe-4S ferredoxin-type 2" evidence="1">
    <location>
        <begin position="138"/>
        <end position="167"/>
    </location>
</feature>
<feature type="region of interest" description="Hydrophobic" evidence="1">
    <location>
        <begin position="1"/>
        <end position="26"/>
    </location>
</feature>
<feature type="binding site" evidence="1">
    <location>
        <position position="49"/>
    </location>
    <ligand>
        <name>[4Fe-4S] cluster</name>
        <dbReference type="ChEBI" id="CHEBI:49883"/>
        <label>1</label>
    </ligand>
</feature>
<feature type="binding site" evidence="1">
    <location>
        <position position="52"/>
    </location>
    <ligand>
        <name>[4Fe-4S] cluster</name>
        <dbReference type="ChEBI" id="CHEBI:49883"/>
        <label>1</label>
    </ligand>
</feature>
<feature type="binding site" evidence="1">
    <location>
        <position position="57"/>
    </location>
    <ligand>
        <name>[4Fe-4S] cluster</name>
        <dbReference type="ChEBI" id="CHEBI:49883"/>
        <label>1</label>
    </ligand>
</feature>
<feature type="binding site" evidence="1">
    <location>
        <position position="74"/>
    </location>
    <ligand>
        <name>[4Fe-4S] cluster</name>
        <dbReference type="ChEBI" id="CHEBI:49883"/>
        <label>1</label>
    </ligand>
</feature>
<feature type="binding site" evidence="1">
    <location>
        <position position="117"/>
    </location>
    <ligand>
        <name>[4Fe-4S] cluster</name>
        <dbReference type="ChEBI" id="CHEBI:49883"/>
        <label>2</label>
    </ligand>
</feature>
<feature type="binding site" evidence="1">
    <location>
        <position position="120"/>
    </location>
    <ligand>
        <name>[4Fe-4S] cluster</name>
        <dbReference type="ChEBI" id="CHEBI:49883"/>
        <label>2</label>
    </ligand>
</feature>
<feature type="binding site" evidence="1">
    <location>
        <position position="123"/>
    </location>
    <ligand>
        <name>[4Fe-4S] cluster</name>
        <dbReference type="ChEBI" id="CHEBI:49883"/>
        <label>2</label>
    </ligand>
</feature>
<feature type="binding site" evidence="1">
    <location>
        <position position="127"/>
    </location>
    <ligand>
        <name>[4Fe-4S] cluster</name>
        <dbReference type="ChEBI" id="CHEBI:49883"/>
        <label>3</label>
    </ligand>
</feature>
<feature type="binding site" evidence="1">
    <location>
        <position position="147"/>
    </location>
    <ligand>
        <name>[4Fe-4S] cluster</name>
        <dbReference type="ChEBI" id="CHEBI:49883"/>
        <label>3</label>
    </ligand>
</feature>
<feature type="binding site" evidence="1">
    <location>
        <position position="150"/>
    </location>
    <ligand>
        <name>[4Fe-4S] cluster</name>
        <dbReference type="ChEBI" id="CHEBI:49883"/>
        <label>3</label>
    </ligand>
</feature>
<feature type="binding site" evidence="1">
    <location>
        <position position="153"/>
    </location>
    <ligand>
        <name>[4Fe-4S] cluster</name>
        <dbReference type="ChEBI" id="CHEBI:49883"/>
        <label>3</label>
    </ligand>
</feature>
<feature type="binding site" evidence="1">
    <location>
        <position position="157"/>
    </location>
    <ligand>
        <name>[4Fe-4S] cluster</name>
        <dbReference type="ChEBI" id="CHEBI:49883"/>
        <label>2</label>
    </ligand>
</feature>
<comment type="function">
    <text evidence="1">Part of a membrane-bound complex that couples electron transfer with translocation of ions across the membrane. Required to maintain the reduced state of SoxR.</text>
</comment>
<comment type="cofactor">
    <cofactor evidence="1">
        <name>[4Fe-4S] cluster</name>
        <dbReference type="ChEBI" id="CHEBI:49883"/>
    </cofactor>
    <text evidence="1">Binds 3 [4Fe-4S] clusters.</text>
</comment>
<comment type="subunit">
    <text evidence="1">The complex is composed of six subunits: RsxA, RsxB, RsxC, RsxD, RsxE and RsxG.</text>
</comment>
<comment type="subcellular location">
    <subcellularLocation>
        <location evidence="1">Cell inner membrane</location>
    </subcellularLocation>
</comment>
<comment type="similarity">
    <text evidence="1">Belongs to the 4Fe4S bacterial-type ferredoxin family. RnfB subfamily.</text>
</comment>